<comment type="function">
    <text evidence="2">With S4 and S5 plays an important role in translational accuracy.</text>
</comment>
<comment type="function">
    <text evidence="2">Interacts with and stabilizes bases of the 16S rRNA that are involved in tRNA selection in the A site and with the mRNA backbone. Located at the interface of the 30S and 50S subunits, it traverses the body of the 30S subunit contacting proteins on the other side and probably holding the rRNA structure together. The combined cluster of proteins S8, S12 and S17 appears to hold together the shoulder and platform of the 30S subunit.</text>
</comment>
<comment type="subunit">
    <text evidence="2">Part of the 30S ribosomal subunit. Contacts proteins S8 and S17. May interact with IF1 in the 30S initiation complex.</text>
</comment>
<comment type="similarity">
    <text evidence="2">Belongs to the universal ribosomal protein uS12 family.</text>
</comment>
<accession>B1LWS1</accession>
<organism>
    <name type="scientific">Methylobacterium radiotolerans (strain ATCC 27329 / DSM 1819 / JCM 2831 / NBRC 15690 / NCIMB 10815 / 0-1)</name>
    <dbReference type="NCBI Taxonomy" id="426355"/>
    <lineage>
        <taxon>Bacteria</taxon>
        <taxon>Pseudomonadati</taxon>
        <taxon>Pseudomonadota</taxon>
        <taxon>Alphaproteobacteria</taxon>
        <taxon>Hyphomicrobiales</taxon>
        <taxon>Methylobacteriaceae</taxon>
        <taxon>Methylobacterium</taxon>
    </lineage>
</organism>
<dbReference type="EMBL" id="CP001001">
    <property type="protein sequence ID" value="ACB24208.1"/>
    <property type="molecule type" value="Genomic_DNA"/>
</dbReference>
<dbReference type="RefSeq" id="WP_007557568.1">
    <property type="nucleotide sequence ID" value="NC_010505.1"/>
</dbReference>
<dbReference type="SMR" id="B1LWS1"/>
<dbReference type="STRING" id="426355.Mrad2831_2213"/>
<dbReference type="GeneID" id="96604899"/>
<dbReference type="KEGG" id="mrd:Mrad2831_2213"/>
<dbReference type="eggNOG" id="COG0048">
    <property type="taxonomic scope" value="Bacteria"/>
</dbReference>
<dbReference type="HOGENOM" id="CLU_104295_1_2_5"/>
<dbReference type="OrthoDB" id="9802366at2"/>
<dbReference type="Proteomes" id="UP000006589">
    <property type="component" value="Chromosome"/>
</dbReference>
<dbReference type="GO" id="GO:0015935">
    <property type="term" value="C:small ribosomal subunit"/>
    <property type="evidence" value="ECO:0007669"/>
    <property type="project" value="InterPro"/>
</dbReference>
<dbReference type="GO" id="GO:0019843">
    <property type="term" value="F:rRNA binding"/>
    <property type="evidence" value="ECO:0007669"/>
    <property type="project" value="UniProtKB-UniRule"/>
</dbReference>
<dbReference type="GO" id="GO:0003735">
    <property type="term" value="F:structural constituent of ribosome"/>
    <property type="evidence" value="ECO:0007669"/>
    <property type="project" value="InterPro"/>
</dbReference>
<dbReference type="GO" id="GO:0000049">
    <property type="term" value="F:tRNA binding"/>
    <property type="evidence" value="ECO:0007669"/>
    <property type="project" value="UniProtKB-UniRule"/>
</dbReference>
<dbReference type="GO" id="GO:0006412">
    <property type="term" value="P:translation"/>
    <property type="evidence" value="ECO:0007669"/>
    <property type="project" value="UniProtKB-UniRule"/>
</dbReference>
<dbReference type="CDD" id="cd03368">
    <property type="entry name" value="Ribosomal_S12"/>
    <property type="match status" value="1"/>
</dbReference>
<dbReference type="FunFam" id="2.40.50.140:FF:000001">
    <property type="entry name" value="30S ribosomal protein S12"/>
    <property type="match status" value="1"/>
</dbReference>
<dbReference type="Gene3D" id="2.40.50.140">
    <property type="entry name" value="Nucleic acid-binding proteins"/>
    <property type="match status" value="1"/>
</dbReference>
<dbReference type="HAMAP" id="MF_00403_B">
    <property type="entry name" value="Ribosomal_uS12_B"/>
    <property type="match status" value="1"/>
</dbReference>
<dbReference type="InterPro" id="IPR012340">
    <property type="entry name" value="NA-bd_OB-fold"/>
</dbReference>
<dbReference type="InterPro" id="IPR006032">
    <property type="entry name" value="Ribosomal_uS12"/>
</dbReference>
<dbReference type="InterPro" id="IPR005679">
    <property type="entry name" value="Ribosomal_uS12_bac"/>
</dbReference>
<dbReference type="NCBIfam" id="TIGR00981">
    <property type="entry name" value="rpsL_bact"/>
    <property type="match status" value="1"/>
</dbReference>
<dbReference type="PANTHER" id="PTHR11652">
    <property type="entry name" value="30S RIBOSOMAL PROTEIN S12 FAMILY MEMBER"/>
    <property type="match status" value="1"/>
</dbReference>
<dbReference type="Pfam" id="PF00164">
    <property type="entry name" value="Ribosom_S12_S23"/>
    <property type="match status" value="1"/>
</dbReference>
<dbReference type="PIRSF" id="PIRSF002133">
    <property type="entry name" value="Ribosomal_S12/S23"/>
    <property type="match status" value="1"/>
</dbReference>
<dbReference type="PRINTS" id="PR01034">
    <property type="entry name" value="RIBOSOMALS12"/>
</dbReference>
<dbReference type="SUPFAM" id="SSF50249">
    <property type="entry name" value="Nucleic acid-binding proteins"/>
    <property type="match status" value="1"/>
</dbReference>
<dbReference type="PROSITE" id="PS00055">
    <property type="entry name" value="RIBOSOMAL_S12"/>
    <property type="match status" value="1"/>
</dbReference>
<feature type="chain" id="PRO_1000194192" description="Small ribosomal subunit protein uS12">
    <location>
        <begin position="1"/>
        <end position="123"/>
    </location>
</feature>
<feature type="modified residue" description="3-methylthioaspartic acid" evidence="1">
    <location>
        <position position="89"/>
    </location>
</feature>
<name>RS12_METRJ</name>
<protein>
    <recommendedName>
        <fullName evidence="2">Small ribosomal subunit protein uS12</fullName>
    </recommendedName>
    <alternativeName>
        <fullName evidence="3">30S ribosomal protein S12</fullName>
    </alternativeName>
</protein>
<sequence length="123" mass="13892">MPTINQLIAQPRKIQRSRNKVPALDACPQKRGVCTRVYTTTPKKPNSALRKVAKVRLTNGFEVIGYIPGEGHNLQEHSVVMIRGGRVKDLPGVRYHILRGVLDTQGVKNRKQRRSKYGAKRPK</sequence>
<proteinExistence type="inferred from homology"/>
<gene>
    <name evidence="2" type="primary">rpsL</name>
    <name type="ordered locus">Mrad2831_2213</name>
</gene>
<reference key="1">
    <citation type="submission" date="2008-03" db="EMBL/GenBank/DDBJ databases">
        <title>Complete sequence of chromosome of Methylobacterium radiotolerans JCM 2831.</title>
        <authorList>
            <consortium name="US DOE Joint Genome Institute"/>
            <person name="Copeland A."/>
            <person name="Lucas S."/>
            <person name="Lapidus A."/>
            <person name="Glavina del Rio T."/>
            <person name="Dalin E."/>
            <person name="Tice H."/>
            <person name="Bruce D."/>
            <person name="Goodwin L."/>
            <person name="Pitluck S."/>
            <person name="Kiss H."/>
            <person name="Brettin T."/>
            <person name="Detter J.C."/>
            <person name="Han C."/>
            <person name="Kuske C.R."/>
            <person name="Schmutz J."/>
            <person name="Larimer F."/>
            <person name="Land M."/>
            <person name="Hauser L."/>
            <person name="Kyrpides N."/>
            <person name="Mikhailova N."/>
            <person name="Marx C.J."/>
            <person name="Richardson P."/>
        </authorList>
    </citation>
    <scope>NUCLEOTIDE SEQUENCE [LARGE SCALE GENOMIC DNA]</scope>
    <source>
        <strain>ATCC 27329 / DSM 1819 / JCM 2831 / NBRC 15690 / NCIMB 10815 / 0-1</strain>
    </source>
</reference>
<evidence type="ECO:0000250" key="1"/>
<evidence type="ECO:0000255" key="2">
    <source>
        <dbReference type="HAMAP-Rule" id="MF_00403"/>
    </source>
</evidence>
<evidence type="ECO:0000305" key="3"/>
<keyword id="KW-0488">Methylation</keyword>
<keyword id="KW-0687">Ribonucleoprotein</keyword>
<keyword id="KW-0689">Ribosomal protein</keyword>
<keyword id="KW-0694">RNA-binding</keyword>
<keyword id="KW-0699">rRNA-binding</keyword>
<keyword id="KW-0820">tRNA-binding</keyword>